<sequence>MTEYLFTSESVSEGHPDKIADQISDAVLDAILEKDLKARVACETLVKTGMVVIAGEIGTSTWVDLEDLVRKTICTIGYTHSEMGFDGRTCAVLNAIGKQSGDIAQGVDRGEAKLQGAGDQGLMFGYACTETPTLMPAPITYAHRLVEKQAQLRHSGALPWLRPDAKSQITFRYRDNTIVGVDAIVLSTQHSEEISLKELTEAVREEIIAPIVPSKWIDKKTRFHINPTGKFVIGGPLGDCGLTGRKIIVDTYGGAARHGGGAFSGKDPSKVDRSAAYAARYVAKNVVAAGLATRCEVQLSYAIGIAEPTSIMVNTFGTGTIDDAEIVRRVQAVFDLTPYGIIEMLDLVRPIYQKTAVYGHFGRELPQFTWEKTDRSDALQQA</sequence>
<dbReference type="EC" id="2.5.1.6" evidence="1"/>
<dbReference type="EMBL" id="CP000513">
    <property type="protein sequence ID" value="ABQ13845.1"/>
    <property type="molecule type" value="Genomic_DNA"/>
</dbReference>
<dbReference type="RefSeq" id="WP_012031284.1">
    <property type="nucleotide sequence ID" value="NC_009446.1"/>
</dbReference>
<dbReference type="SMR" id="A5EY13"/>
<dbReference type="STRING" id="246195.DNO_0971"/>
<dbReference type="KEGG" id="dno:DNO_0971"/>
<dbReference type="eggNOG" id="COG0192">
    <property type="taxonomic scope" value="Bacteria"/>
</dbReference>
<dbReference type="HOGENOM" id="CLU_041802_1_1_6"/>
<dbReference type="OrthoDB" id="9801686at2"/>
<dbReference type="UniPathway" id="UPA00315">
    <property type="reaction ID" value="UER00080"/>
</dbReference>
<dbReference type="Proteomes" id="UP000000248">
    <property type="component" value="Chromosome"/>
</dbReference>
<dbReference type="GO" id="GO:0005737">
    <property type="term" value="C:cytoplasm"/>
    <property type="evidence" value="ECO:0007669"/>
    <property type="project" value="UniProtKB-SubCell"/>
</dbReference>
<dbReference type="GO" id="GO:0005524">
    <property type="term" value="F:ATP binding"/>
    <property type="evidence" value="ECO:0007669"/>
    <property type="project" value="UniProtKB-UniRule"/>
</dbReference>
<dbReference type="GO" id="GO:0000287">
    <property type="term" value="F:magnesium ion binding"/>
    <property type="evidence" value="ECO:0007669"/>
    <property type="project" value="UniProtKB-UniRule"/>
</dbReference>
<dbReference type="GO" id="GO:0004478">
    <property type="term" value="F:methionine adenosyltransferase activity"/>
    <property type="evidence" value="ECO:0007669"/>
    <property type="project" value="UniProtKB-UniRule"/>
</dbReference>
<dbReference type="GO" id="GO:0006730">
    <property type="term" value="P:one-carbon metabolic process"/>
    <property type="evidence" value="ECO:0007669"/>
    <property type="project" value="UniProtKB-KW"/>
</dbReference>
<dbReference type="GO" id="GO:0006556">
    <property type="term" value="P:S-adenosylmethionine biosynthetic process"/>
    <property type="evidence" value="ECO:0007669"/>
    <property type="project" value="UniProtKB-UniRule"/>
</dbReference>
<dbReference type="CDD" id="cd18079">
    <property type="entry name" value="S-AdoMet_synt"/>
    <property type="match status" value="1"/>
</dbReference>
<dbReference type="FunFam" id="3.30.300.10:FF:000003">
    <property type="entry name" value="S-adenosylmethionine synthase"/>
    <property type="match status" value="1"/>
</dbReference>
<dbReference type="FunFam" id="3.30.300.10:FF:000004">
    <property type="entry name" value="S-adenosylmethionine synthase"/>
    <property type="match status" value="1"/>
</dbReference>
<dbReference type="Gene3D" id="3.30.300.10">
    <property type="match status" value="3"/>
</dbReference>
<dbReference type="HAMAP" id="MF_00086">
    <property type="entry name" value="S_AdoMet_synth1"/>
    <property type="match status" value="1"/>
</dbReference>
<dbReference type="InterPro" id="IPR022631">
    <property type="entry name" value="ADOMET_SYNTHASE_CS"/>
</dbReference>
<dbReference type="InterPro" id="IPR022630">
    <property type="entry name" value="S-AdoMet_synt_C"/>
</dbReference>
<dbReference type="InterPro" id="IPR022629">
    <property type="entry name" value="S-AdoMet_synt_central"/>
</dbReference>
<dbReference type="InterPro" id="IPR022628">
    <property type="entry name" value="S-AdoMet_synt_N"/>
</dbReference>
<dbReference type="InterPro" id="IPR002133">
    <property type="entry name" value="S-AdoMet_synthetase"/>
</dbReference>
<dbReference type="InterPro" id="IPR022636">
    <property type="entry name" value="S-AdoMet_synthetase_sfam"/>
</dbReference>
<dbReference type="NCBIfam" id="TIGR01034">
    <property type="entry name" value="metK"/>
    <property type="match status" value="1"/>
</dbReference>
<dbReference type="PANTHER" id="PTHR11964">
    <property type="entry name" value="S-ADENOSYLMETHIONINE SYNTHETASE"/>
    <property type="match status" value="1"/>
</dbReference>
<dbReference type="Pfam" id="PF02773">
    <property type="entry name" value="S-AdoMet_synt_C"/>
    <property type="match status" value="1"/>
</dbReference>
<dbReference type="Pfam" id="PF02772">
    <property type="entry name" value="S-AdoMet_synt_M"/>
    <property type="match status" value="1"/>
</dbReference>
<dbReference type="Pfam" id="PF00438">
    <property type="entry name" value="S-AdoMet_synt_N"/>
    <property type="match status" value="1"/>
</dbReference>
<dbReference type="PIRSF" id="PIRSF000497">
    <property type="entry name" value="MAT"/>
    <property type="match status" value="1"/>
</dbReference>
<dbReference type="SUPFAM" id="SSF55973">
    <property type="entry name" value="S-adenosylmethionine synthetase"/>
    <property type="match status" value="3"/>
</dbReference>
<dbReference type="PROSITE" id="PS00376">
    <property type="entry name" value="ADOMET_SYNTHASE_1"/>
    <property type="match status" value="1"/>
</dbReference>
<dbReference type="PROSITE" id="PS00377">
    <property type="entry name" value="ADOMET_SYNTHASE_2"/>
    <property type="match status" value="1"/>
</dbReference>
<accession>A5EY13</accession>
<gene>
    <name evidence="1" type="primary">metK</name>
    <name type="ordered locus">DNO_0971</name>
</gene>
<proteinExistence type="inferred from homology"/>
<protein>
    <recommendedName>
        <fullName evidence="1">S-adenosylmethionine synthase</fullName>
        <shortName evidence="1">AdoMet synthase</shortName>
        <ecNumber evidence="1">2.5.1.6</ecNumber>
    </recommendedName>
    <alternativeName>
        <fullName evidence="1">MAT</fullName>
    </alternativeName>
    <alternativeName>
        <fullName evidence="1">Methionine adenosyltransferase</fullName>
    </alternativeName>
</protein>
<organism>
    <name type="scientific">Dichelobacter nodosus (strain VCS1703A)</name>
    <dbReference type="NCBI Taxonomy" id="246195"/>
    <lineage>
        <taxon>Bacteria</taxon>
        <taxon>Pseudomonadati</taxon>
        <taxon>Pseudomonadota</taxon>
        <taxon>Gammaproteobacteria</taxon>
        <taxon>Cardiobacteriales</taxon>
        <taxon>Cardiobacteriaceae</taxon>
        <taxon>Dichelobacter</taxon>
    </lineage>
</organism>
<keyword id="KW-0067">ATP-binding</keyword>
<keyword id="KW-0963">Cytoplasm</keyword>
<keyword id="KW-0460">Magnesium</keyword>
<keyword id="KW-0479">Metal-binding</keyword>
<keyword id="KW-0547">Nucleotide-binding</keyword>
<keyword id="KW-0554">One-carbon metabolism</keyword>
<keyword id="KW-0630">Potassium</keyword>
<keyword id="KW-1185">Reference proteome</keyword>
<keyword id="KW-0808">Transferase</keyword>
<feature type="chain" id="PRO_1000057558" description="S-adenosylmethionine synthase">
    <location>
        <begin position="1"/>
        <end position="382"/>
    </location>
</feature>
<feature type="region of interest" description="Flexible loop" evidence="1">
    <location>
        <begin position="99"/>
        <end position="109"/>
    </location>
</feature>
<feature type="binding site" description="in other chain" evidence="1">
    <location>
        <position position="15"/>
    </location>
    <ligand>
        <name>ATP</name>
        <dbReference type="ChEBI" id="CHEBI:30616"/>
        <note>ligand shared between two neighboring subunits</note>
    </ligand>
</feature>
<feature type="binding site" evidence="1">
    <location>
        <position position="17"/>
    </location>
    <ligand>
        <name>Mg(2+)</name>
        <dbReference type="ChEBI" id="CHEBI:18420"/>
    </ligand>
</feature>
<feature type="binding site" evidence="1">
    <location>
        <position position="43"/>
    </location>
    <ligand>
        <name>K(+)</name>
        <dbReference type="ChEBI" id="CHEBI:29103"/>
    </ligand>
</feature>
<feature type="binding site" description="in other chain" evidence="1">
    <location>
        <position position="56"/>
    </location>
    <ligand>
        <name>L-methionine</name>
        <dbReference type="ChEBI" id="CHEBI:57844"/>
        <note>ligand shared between two neighboring subunits</note>
    </ligand>
</feature>
<feature type="binding site" description="in other chain" evidence="1">
    <location>
        <position position="99"/>
    </location>
    <ligand>
        <name>L-methionine</name>
        <dbReference type="ChEBI" id="CHEBI:57844"/>
        <note>ligand shared between two neighboring subunits</note>
    </ligand>
</feature>
<feature type="binding site" description="in other chain" evidence="1">
    <location>
        <begin position="164"/>
        <end position="166"/>
    </location>
    <ligand>
        <name>ATP</name>
        <dbReference type="ChEBI" id="CHEBI:30616"/>
        <note>ligand shared between two neighboring subunits</note>
    </ligand>
</feature>
<feature type="binding site" description="in other chain" evidence="1">
    <location>
        <begin position="230"/>
        <end position="231"/>
    </location>
    <ligand>
        <name>ATP</name>
        <dbReference type="ChEBI" id="CHEBI:30616"/>
        <note>ligand shared between two neighboring subunits</note>
    </ligand>
</feature>
<feature type="binding site" evidence="1">
    <location>
        <position position="239"/>
    </location>
    <ligand>
        <name>ATP</name>
        <dbReference type="ChEBI" id="CHEBI:30616"/>
        <note>ligand shared between two neighboring subunits</note>
    </ligand>
</feature>
<feature type="binding site" evidence="1">
    <location>
        <position position="239"/>
    </location>
    <ligand>
        <name>L-methionine</name>
        <dbReference type="ChEBI" id="CHEBI:57844"/>
        <note>ligand shared between two neighboring subunits</note>
    </ligand>
</feature>
<feature type="binding site" description="in other chain" evidence="1">
    <location>
        <begin position="245"/>
        <end position="246"/>
    </location>
    <ligand>
        <name>ATP</name>
        <dbReference type="ChEBI" id="CHEBI:30616"/>
        <note>ligand shared between two neighboring subunits</note>
    </ligand>
</feature>
<feature type="binding site" evidence="1">
    <location>
        <position position="262"/>
    </location>
    <ligand>
        <name>ATP</name>
        <dbReference type="ChEBI" id="CHEBI:30616"/>
        <note>ligand shared between two neighboring subunits</note>
    </ligand>
</feature>
<feature type="binding site" evidence="1">
    <location>
        <position position="266"/>
    </location>
    <ligand>
        <name>ATP</name>
        <dbReference type="ChEBI" id="CHEBI:30616"/>
        <note>ligand shared between two neighboring subunits</note>
    </ligand>
</feature>
<feature type="binding site" description="in other chain" evidence="1">
    <location>
        <position position="270"/>
    </location>
    <ligand>
        <name>L-methionine</name>
        <dbReference type="ChEBI" id="CHEBI:57844"/>
        <note>ligand shared between two neighboring subunits</note>
    </ligand>
</feature>
<comment type="function">
    <text evidence="1">Catalyzes the formation of S-adenosylmethionine (AdoMet) from methionine and ATP. The overall synthetic reaction is composed of two sequential steps, AdoMet formation and the subsequent tripolyphosphate hydrolysis which occurs prior to release of AdoMet from the enzyme.</text>
</comment>
<comment type="catalytic activity">
    <reaction evidence="1">
        <text>L-methionine + ATP + H2O = S-adenosyl-L-methionine + phosphate + diphosphate</text>
        <dbReference type="Rhea" id="RHEA:21080"/>
        <dbReference type="ChEBI" id="CHEBI:15377"/>
        <dbReference type="ChEBI" id="CHEBI:30616"/>
        <dbReference type="ChEBI" id="CHEBI:33019"/>
        <dbReference type="ChEBI" id="CHEBI:43474"/>
        <dbReference type="ChEBI" id="CHEBI:57844"/>
        <dbReference type="ChEBI" id="CHEBI:59789"/>
        <dbReference type="EC" id="2.5.1.6"/>
    </reaction>
</comment>
<comment type="cofactor">
    <cofactor evidence="1">
        <name>Mg(2+)</name>
        <dbReference type="ChEBI" id="CHEBI:18420"/>
    </cofactor>
    <text evidence="1">Binds 2 divalent ions per subunit.</text>
</comment>
<comment type="cofactor">
    <cofactor evidence="1">
        <name>K(+)</name>
        <dbReference type="ChEBI" id="CHEBI:29103"/>
    </cofactor>
    <text evidence="1">Binds 1 potassium ion per subunit.</text>
</comment>
<comment type="pathway">
    <text evidence="1">Amino-acid biosynthesis; S-adenosyl-L-methionine biosynthesis; S-adenosyl-L-methionine from L-methionine: step 1/1.</text>
</comment>
<comment type="subunit">
    <text evidence="1">Homotetramer; dimer of dimers.</text>
</comment>
<comment type="subcellular location">
    <subcellularLocation>
        <location evidence="1">Cytoplasm</location>
    </subcellularLocation>
</comment>
<comment type="similarity">
    <text evidence="1">Belongs to the AdoMet synthase family.</text>
</comment>
<evidence type="ECO:0000255" key="1">
    <source>
        <dbReference type="HAMAP-Rule" id="MF_00086"/>
    </source>
</evidence>
<name>METK_DICNV</name>
<reference key="1">
    <citation type="journal article" date="2007" name="Nat. Biotechnol.">
        <title>Genome sequence and identification of candidate vaccine antigens from the animal pathogen Dichelobacter nodosus.</title>
        <authorList>
            <person name="Myers G.S.A."/>
            <person name="Parker D."/>
            <person name="Al-Hasani K."/>
            <person name="Kennan R.M."/>
            <person name="Seemann T."/>
            <person name="Ren Q."/>
            <person name="Badger J.H."/>
            <person name="Selengut J.D."/>
            <person name="Deboy R.T."/>
            <person name="Tettelin H."/>
            <person name="Boyce J.D."/>
            <person name="McCarl V.P."/>
            <person name="Han X."/>
            <person name="Nelson W.C."/>
            <person name="Madupu R."/>
            <person name="Mohamoud Y."/>
            <person name="Holley T."/>
            <person name="Fedorova N."/>
            <person name="Khouri H."/>
            <person name="Bottomley S.P."/>
            <person name="Whittington R.J."/>
            <person name="Adler B."/>
            <person name="Songer J.G."/>
            <person name="Rood J.I."/>
            <person name="Paulsen I.T."/>
        </authorList>
    </citation>
    <scope>NUCLEOTIDE SEQUENCE [LARGE SCALE GENOMIC DNA]</scope>
    <source>
        <strain>VCS1703A</strain>
    </source>
</reference>